<sequence>MKVKPSVKKICDKCRVIRRHGRVMVICDNPRHKQRQG</sequence>
<protein>
    <recommendedName>
        <fullName evidence="1">Large ribosomal subunit protein bL36</fullName>
    </recommendedName>
    <alternativeName>
        <fullName evidence="2">50S ribosomal protein L36</fullName>
    </alternativeName>
</protein>
<proteinExistence type="inferred from homology"/>
<comment type="similarity">
    <text evidence="1">Belongs to the bacterial ribosomal protein bL36 family.</text>
</comment>
<keyword id="KW-1185">Reference proteome</keyword>
<keyword id="KW-0687">Ribonucleoprotein</keyword>
<keyword id="KW-0689">Ribosomal protein</keyword>
<reference key="1">
    <citation type="journal article" date="2001" name="Proc. Natl. Acad. Sci. U.S.A.">
        <title>Genome sequence of an industrial microorganism Streptomyces avermitilis: deducing the ability of producing secondary metabolites.</title>
        <authorList>
            <person name="Omura S."/>
            <person name="Ikeda H."/>
            <person name="Ishikawa J."/>
            <person name="Hanamoto A."/>
            <person name="Takahashi C."/>
            <person name="Shinose M."/>
            <person name="Takahashi Y."/>
            <person name="Horikawa H."/>
            <person name="Nakazawa H."/>
            <person name="Osonoe T."/>
            <person name="Kikuchi H."/>
            <person name="Shiba T."/>
            <person name="Sakaki Y."/>
            <person name="Hattori M."/>
        </authorList>
    </citation>
    <scope>NUCLEOTIDE SEQUENCE [LARGE SCALE GENOMIC DNA]</scope>
    <source>
        <strain>ATCC 31267 / DSM 46492 / JCM 5070 / NBRC 14893 / NCIMB 12804 / NRRL 8165 / MA-4680</strain>
    </source>
</reference>
<reference key="2">
    <citation type="journal article" date="2003" name="Nat. Biotechnol.">
        <title>Complete genome sequence and comparative analysis of the industrial microorganism Streptomyces avermitilis.</title>
        <authorList>
            <person name="Ikeda H."/>
            <person name="Ishikawa J."/>
            <person name="Hanamoto A."/>
            <person name="Shinose M."/>
            <person name="Kikuchi H."/>
            <person name="Shiba T."/>
            <person name="Sakaki Y."/>
            <person name="Hattori M."/>
            <person name="Omura S."/>
        </authorList>
    </citation>
    <scope>NUCLEOTIDE SEQUENCE [LARGE SCALE GENOMIC DNA]</scope>
    <source>
        <strain>ATCC 31267 / DSM 46492 / JCM 5070 / NBRC 14893 / NCIMB 12804 / NRRL 8165 / MA-4680</strain>
    </source>
</reference>
<evidence type="ECO:0000255" key="1">
    <source>
        <dbReference type="HAMAP-Rule" id="MF_00251"/>
    </source>
</evidence>
<evidence type="ECO:0000305" key="2"/>
<accession>P66302</accession>
<accession>O86772</accession>
<organism>
    <name type="scientific">Streptomyces avermitilis (strain ATCC 31267 / DSM 46492 / JCM 5070 / NBRC 14893 / NCIMB 12804 / NRRL 8165 / MA-4680)</name>
    <dbReference type="NCBI Taxonomy" id="227882"/>
    <lineage>
        <taxon>Bacteria</taxon>
        <taxon>Bacillati</taxon>
        <taxon>Actinomycetota</taxon>
        <taxon>Actinomycetes</taxon>
        <taxon>Kitasatosporales</taxon>
        <taxon>Streptomycetaceae</taxon>
        <taxon>Streptomyces</taxon>
    </lineage>
</organism>
<name>RL36_STRAW</name>
<gene>
    <name evidence="1" type="primary">rpmJ</name>
    <name type="ordered locus">SAV_4950</name>
</gene>
<feature type="chain" id="PRO_0000126265" description="Large ribosomal subunit protein bL36">
    <location>
        <begin position="1"/>
        <end position="37"/>
    </location>
</feature>
<dbReference type="EMBL" id="BA000030">
    <property type="protein sequence ID" value="BAC72662.1"/>
    <property type="molecule type" value="Genomic_DNA"/>
</dbReference>
<dbReference type="RefSeq" id="WP_003974245.1">
    <property type="nucleotide sequence ID" value="NZ_JZJK01000077.1"/>
</dbReference>
<dbReference type="SMR" id="P66302"/>
<dbReference type="GeneID" id="97462932"/>
<dbReference type="KEGG" id="sma:SAVERM_4950"/>
<dbReference type="eggNOG" id="COG0257">
    <property type="taxonomic scope" value="Bacteria"/>
</dbReference>
<dbReference type="HOGENOM" id="CLU_135723_6_2_11"/>
<dbReference type="OrthoDB" id="9802520at2"/>
<dbReference type="Proteomes" id="UP000000428">
    <property type="component" value="Chromosome"/>
</dbReference>
<dbReference type="GO" id="GO:0005737">
    <property type="term" value="C:cytoplasm"/>
    <property type="evidence" value="ECO:0007669"/>
    <property type="project" value="UniProtKB-ARBA"/>
</dbReference>
<dbReference type="GO" id="GO:1990904">
    <property type="term" value="C:ribonucleoprotein complex"/>
    <property type="evidence" value="ECO:0007669"/>
    <property type="project" value="UniProtKB-KW"/>
</dbReference>
<dbReference type="GO" id="GO:0005840">
    <property type="term" value="C:ribosome"/>
    <property type="evidence" value="ECO:0007669"/>
    <property type="project" value="UniProtKB-KW"/>
</dbReference>
<dbReference type="GO" id="GO:0003735">
    <property type="term" value="F:structural constituent of ribosome"/>
    <property type="evidence" value="ECO:0007669"/>
    <property type="project" value="InterPro"/>
</dbReference>
<dbReference type="GO" id="GO:0006412">
    <property type="term" value="P:translation"/>
    <property type="evidence" value="ECO:0007669"/>
    <property type="project" value="UniProtKB-UniRule"/>
</dbReference>
<dbReference type="HAMAP" id="MF_00251">
    <property type="entry name" value="Ribosomal_bL36"/>
    <property type="match status" value="1"/>
</dbReference>
<dbReference type="InterPro" id="IPR000473">
    <property type="entry name" value="Ribosomal_bL36"/>
</dbReference>
<dbReference type="InterPro" id="IPR035977">
    <property type="entry name" value="Ribosomal_bL36_sp"/>
</dbReference>
<dbReference type="NCBIfam" id="TIGR01022">
    <property type="entry name" value="rpmJ_bact"/>
    <property type="match status" value="1"/>
</dbReference>
<dbReference type="PANTHER" id="PTHR42888">
    <property type="entry name" value="50S RIBOSOMAL PROTEIN L36, CHLOROPLASTIC"/>
    <property type="match status" value="1"/>
</dbReference>
<dbReference type="PANTHER" id="PTHR42888:SF1">
    <property type="entry name" value="LARGE RIBOSOMAL SUBUNIT PROTEIN BL36C"/>
    <property type="match status" value="1"/>
</dbReference>
<dbReference type="Pfam" id="PF00444">
    <property type="entry name" value="Ribosomal_L36"/>
    <property type="match status" value="1"/>
</dbReference>
<dbReference type="SUPFAM" id="SSF57840">
    <property type="entry name" value="Ribosomal protein L36"/>
    <property type="match status" value="1"/>
</dbReference>
<dbReference type="PROSITE" id="PS00828">
    <property type="entry name" value="RIBOSOMAL_L36"/>
    <property type="match status" value="1"/>
</dbReference>